<keyword id="KW-0002">3D-structure</keyword>
<keyword id="KW-0963">Cytoplasm</keyword>
<keyword id="KW-0378">Hydrolase</keyword>
<keyword id="KW-0488">Methylation</keyword>
<keyword id="KW-0539">Nucleus</keyword>
<keyword id="KW-0597">Phosphoprotein</keyword>
<keyword id="KW-0904">Protein phosphatase</keyword>
<keyword id="KW-1267">Proteomics identification</keyword>
<keyword id="KW-1185">Reference proteome</keyword>
<dbReference type="EC" id="3.1.3.16"/>
<dbReference type="EMBL" id="AB084258">
    <property type="protein sequence ID" value="BAG16181.1"/>
    <property type="molecule type" value="mRNA"/>
</dbReference>
<dbReference type="EMBL" id="AC023359">
    <property type="status" value="NOT_ANNOTATED_CDS"/>
    <property type="molecule type" value="Genomic_DNA"/>
</dbReference>
<dbReference type="EMBL" id="AC025264">
    <property type="status" value="NOT_ANNOTATED_CDS"/>
    <property type="molecule type" value="Genomic_DNA"/>
</dbReference>
<dbReference type="EMBL" id="AC048341">
    <property type="status" value="NOT_ANNOTATED_CDS"/>
    <property type="molecule type" value="Genomic_DNA"/>
</dbReference>
<dbReference type="EMBL" id="AC078814">
    <property type="status" value="NOT_ANNOTATED_CDS"/>
    <property type="molecule type" value="Genomic_DNA"/>
</dbReference>
<dbReference type="EMBL" id="CH471054">
    <property type="protein sequence ID" value="EAW97112.1"/>
    <property type="molecule type" value="Genomic_DNA"/>
</dbReference>
<dbReference type="EMBL" id="BC157843">
    <property type="protein sequence ID" value="AAI57844.1"/>
    <property type="molecule type" value="mRNA"/>
</dbReference>
<dbReference type="EMBL" id="AB032983">
    <property type="protein sequence ID" value="BAA86471.1"/>
    <property type="molecule type" value="mRNA"/>
</dbReference>
<dbReference type="CCDS" id="CCDS44934.1"/>
<dbReference type="RefSeq" id="NP_065751.1">
    <property type="nucleotide sequence ID" value="NM_020700.2"/>
</dbReference>
<dbReference type="PDB" id="7KPR">
    <property type="method" value="X-ray"/>
    <property type="resolution" value="3.09 A"/>
    <property type="chains" value="A/B=33-514"/>
</dbReference>
<dbReference type="PDB" id="7L4I">
    <property type="method" value="X-ray"/>
    <property type="resolution" value="2.58 A"/>
    <property type="chains" value="A/B=33-187, A/B=227-514"/>
</dbReference>
<dbReference type="PDB" id="7L4J">
    <property type="method" value="X-ray"/>
    <property type="resolution" value="2.45 A"/>
    <property type="chains" value="A/B=33-187, A/B=227-514"/>
</dbReference>
<dbReference type="PDB" id="7N0Z">
    <property type="method" value="X-ray"/>
    <property type="resolution" value="2.19 A"/>
    <property type="chains" value="A/B=33-187, A/B=227-514"/>
</dbReference>
<dbReference type="PDBsum" id="7KPR"/>
<dbReference type="PDBsum" id="7L4I"/>
<dbReference type="PDBsum" id="7L4J"/>
<dbReference type="PDBsum" id="7N0Z"/>
<dbReference type="SMR" id="Q9ULR3"/>
<dbReference type="BioGRID" id="121530">
    <property type="interactions" value="122"/>
</dbReference>
<dbReference type="FunCoup" id="Q9ULR3">
    <property type="interactions" value="3384"/>
</dbReference>
<dbReference type="IntAct" id="Q9ULR3">
    <property type="interactions" value="51"/>
</dbReference>
<dbReference type="MINT" id="Q9ULR3"/>
<dbReference type="STRING" id="9606.ENSP00000228705"/>
<dbReference type="DEPOD" id="PPM1H"/>
<dbReference type="GlyGen" id="Q9ULR3">
    <property type="glycosylation" value="1 site"/>
</dbReference>
<dbReference type="iPTMnet" id="Q9ULR3"/>
<dbReference type="MetOSite" id="Q9ULR3"/>
<dbReference type="PhosphoSitePlus" id="Q9ULR3"/>
<dbReference type="SwissPalm" id="Q9ULR3"/>
<dbReference type="BioMuta" id="PPM1H"/>
<dbReference type="DMDM" id="147721250"/>
<dbReference type="jPOST" id="Q9ULR3"/>
<dbReference type="MassIVE" id="Q9ULR3"/>
<dbReference type="PaxDb" id="9606-ENSP00000228705"/>
<dbReference type="PeptideAtlas" id="Q9ULR3"/>
<dbReference type="ProteomicsDB" id="85100"/>
<dbReference type="Pumba" id="Q9ULR3"/>
<dbReference type="Antibodypedia" id="53103">
    <property type="antibodies" value="151 antibodies from 22 providers"/>
</dbReference>
<dbReference type="DNASU" id="57460"/>
<dbReference type="Ensembl" id="ENST00000228705.7">
    <property type="protein sequence ID" value="ENSP00000228705.5"/>
    <property type="gene ID" value="ENSG00000111110.12"/>
</dbReference>
<dbReference type="GeneID" id="57460"/>
<dbReference type="KEGG" id="hsa:57460"/>
<dbReference type="MANE-Select" id="ENST00000228705.7">
    <property type="protein sequence ID" value="ENSP00000228705.5"/>
    <property type="RefSeq nucleotide sequence ID" value="NM_020700.2"/>
    <property type="RefSeq protein sequence ID" value="NP_065751.1"/>
</dbReference>
<dbReference type="UCSC" id="uc001srk.5">
    <property type="organism name" value="human"/>
</dbReference>
<dbReference type="AGR" id="HGNC:18583"/>
<dbReference type="CTD" id="57460"/>
<dbReference type="DisGeNET" id="57460"/>
<dbReference type="GeneCards" id="PPM1H"/>
<dbReference type="HGNC" id="HGNC:18583">
    <property type="gene designation" value="PPM1H"/>
</dbReference>
<dbReference type="HPA" id="ENSG00000111110">
    <property type="expression patterns" value="Tissue enhanced (brain, parathyroid gland)"/>
</dbReference>
<dbReference type="MIM" id="616016">
    <property type="type" value="gene"/>
</dbReference>
<dbReference type="neXtProt" id="NX_Q9ULR3"/>
<dbReference type="OpenTargets" id="ENSG00000111110"/>
<dbReference type="PharmGKB" id="PA38354"/>
<dbReference type="VEuPathDB" id="HostDB:ENSG00000111110"/>
<dbReference type="eggNOG" id="KOG1323">
    <property type="taxonomic scope" value="Eukaryota"/>
</dbReference>
<dbReference type="GeneTree" id="ENSGT00940000160095"/>
<dbReference type="HOGENOM" id="CLU_029072_2_0_1"/>
<dbReference type="InParanoid" id="Q9ULR3"/>
<dbReference type="OMA" id="VMAGGSN"/>
<dbReference type="OrthoDB" id="10264738at2759"/>
<dbReference type="PAN-GO" id="Q9ULR3">
    <property type="GO annotations" value="1 GO annotation based on evolutionary models"/>
</dbReference>
<dbReference type="PhylomeDB" id="Q9ULR3"/>
<dbReference type="TreeFam" id="TF314700"/>
<dbReference type="PathwayCommons" id="Q9ULR3"/>
<dbReference type="SignaLink" id="Q9ULR3"/>
<dbReference type="BioGRID-ORCS" id="57460">
    <property type="hits" value="15 hits in 1166 CRISPR screens"/>
</dbReference>
<dbReference type="ChiTaRS" id="PPM1H">
    <property type="organism name" value="human"/>
</dbReference>
<dbReference type="GenomeRNAi" id="57460"/>
<dbReference type="Pharos" id="Q9ULR3">
    <property type="development level" value="Tbio"/>
</dbReference>
<dbReference type="PRO" id="PR:Q9ULR3"/>
<dbReference type="Proteomes" id="UP000005640">
    <property type="component" value="Chromosome 12"/>
</dbReference>
<dbReference type="RNAct" id="Q9ULR3">
    <property type="molecule type" value="protein"/>
</dbReference>
<dbReference type="Bgee" id="ENSG00000111110">
    <property type="expression patterns" value="Expressed in paraflocculus and 179 other cell types or tissues"/>
</dbReference>
<dbReference type="GO" id="GO:0005737">
    <property type="term" value="C:cytoplasm"/>
    <property type="evidence" value="ECO:0000314"/>
    <property type="project" value="UniProtKB"/>
</dbReference>
<dbReference type="GO" id="GO:0098978">
    <property type="term" value="C:glutamatergic synapse"/>
    <property type="evidence" value="ECO:0007669"/>
    <property type="project" value="Ensembl"/>
</dbReference>
<dbReference type="GO" id="GO:0005739">
    <property type="term" value="C:mitochondrion"/>
    <property type="evidence" value="ECO:0000318"/>
    <property type="project" value="GO_Central"/>
</dbReference>
<dbReference type="GO" id="GO:0005654">
    <property type="term" value="C:nucleoplasm"/>
    <property type="evidence" value="ECO:0000314"/>
    <property type="project" value="HPA"/>
</dbReference>
<dbReference type="GO" id="GO:0005634">
    <property type="term" value="C:nucleus"/>
    <property type="evidence" value="ECO:0000314"/>
    <property type="project" value="UniProtKB"/>
</dbReference>
<dbReference type="GO" id="GO:0004741">
    <property type="term" value="F:[pyruvate dehydrogenase (acetyl-transferring)]-phosphatase activity"/>
    <property type="evidence" value="ECO:0000318"/>
    <property type="project" value="GO_Central"/>
</dbReference>
<dbReference type="GO" id="GO:0042802">
    <property type="term" value="F:identical protein binding"/>
    <property type="evidence" value="ECO:0000353"/>
    <property type="project" value="IntAct"/>
</dbReference>
<dbReference type="GO" id="GO:0004721">
    <property type="term" value="F:phosphoprotein phosphatase activity"/>
    <property type="evidence" value="ECO:0000315"/>
    <property type="project" value="UniProtKB"/>
</dbReference>
<dbReference type="GO" id="GO:0007165">
    <property type="term" value="P:signal transduction"/>
    <property type="evidence" value="ECO:0000318"/>
    <property type="project" value="GO_Central"/>
</dbReference>
<dbReference type="CDD" id="cd00143">
    <property type="entry name" value="PP2Cc"/>
    <property type="match status" value="1"/>
</dbReference>
<dbReference type="Gene3D" id="3.60.40.10">
    <property type="entry name" value="PPM-type phosphatase domain"/>
    <property type="match status" value="1"/>
</dbReference>
<dbReference type="InterPro" id="IPR015655">
    <property type="entry name" value="PP2C"/>
</dbReference>
<dbReference type="InterPro" id="IPR036457">
    <property type="entry name" value="PPM-type-like_dom_sf"/>
</dbReference>
<dbReference type="InterPro" id="IPR001932">
    <property type="entry name" value="PPM-type_phosphatase-like_dom"/>
</dbReference>
<dbReference type="PANTHER" id="PTHR13832:SF287">
    <property type="entry name" value="PROTEIN PHOSPHATASE 1H"/>
    <property type="match status" value="1"/>
</dbReference>
<dbReference type="PANTHER" id="PTHR13832">
    <property type="entry name" value="PROTEIN PHOSPHATASE 2C"/>
    <property type="match status" value="1"/>
</dbReference>
<dbReference type="Pfam" id="PF00481">
    <property type="entry name" value="PP2C"/>
    <property type="match status" value="2"/>
</dbReference>
<dbReference type="SMART" id="SM00332">
    <property type="entry name" value="PP2Cc"/>
    <property type="match status" value="1"/>
</dbReference>
<dbReference type="SUPFAM" id="SSF81606">
    <property type="entry name" value="PP2C-like"/>
    <property type="match status" value="1"/>
</dbReference>
<dbReference type="PROSITE" id="PS51746">
    <property type="entry name" value="PPM_2"/>
    <property type="match status" value="1"/>
</dbReference>
<accession>Q9ULR3</accession>
<accession>B1Q2A9</accession>
<accession>B2RXG4</accession>
<accession>Q6PI86</accession>
<feature type="chain" id="PRO_0000286603" description="Protein phosphatase 1H">
    <location>
        <begin position="1"/>
        <end position="514"/>
    </location>
</feature>
<feature type="domain" description="PPM-type phosphatase" evidence="3">
    <location>
        <begin position="77"/>
        <end position="507"/>
    </location>
</feature>
<feature type="region of interest" description="Disordered" evidence="4">
    <location>
        <begin position="109"/>
        <end position="135"/>
    </location>
</feature>
<feature type="modified residue" description="Phosphoserine" evidence="1">
    <location>
        <position position="7"/>
    </location>
</feature>
<feature type="modified residue" description="Phosphothreonine" evidence="2">
    <location>
        <position position="113"/>
    </location>
</feature>
<feature type="modified residue" description="Phosphoserine" evidence="9 10 12">
    <location>
        <position position="124"/>
    </location>
</feature>
<feature type="modified residue" description="Phosphoserine" evidence="9 11 12">
    <location>
        <position position="211"/>
    </location>
</feature>
<feature type="modified residue" description="Omega-N-methylarginine" evidence="1">
    <location>
        <position position="213"/>
    </location>
</feature>
<feature type="modified residue" description="Phosphoserine" evidence="9 12">
    <location>
        <position position="221"/>
    </location>
</feature>
<feature type="modified residue" description="Phosphothreonine" evidence="9">
    <location>
        <position position="224"/>
    </location>
</feature>
<feature type="modified residue" description="Phosphoserine" evidence="9">
    <location>
        <position position="422"/>
    </location>
</feature>
<feature type="mutagenesis site" description="Decreased enzymatic activity." evidence="5">
    <original>H</original>
    <variation>L</variation>
    <location>
        <position position="153"/>
    </location>
</feature>
<feature type="sequence conflict" description="In Ref. 4; AAI57844." evidence="7" ref="4">
    <original>A</original>
    <variation>V</variation>
    <location>
        <position position="77"/>
    </location>
</feature>
<feature type="strand" evidence="14">
    <location>
        <begin position="37"/>
        <end position="39"/>
    </location>
</feature>
<feature type="helix" evidence="14">
    <location>
        <begin position="45"/>
        <end position="47"/>
    </location>
</feature>
<feature type="helix" evidence="14">
    <location>
        <begin position="51"/>
        <end position="57"/>
    </location>
</feature>
<feature type="turn" evidence="14">
    <location>
        <begin position="60"/>
        <end position="62"/>
    </location>
</feature>
<feature type="strand" evidence="13">
    <location>
        <begin position="65"/>
        <end position="67"/>
    </location>
</feature>
<feature type="helix" evidence="14">
    <location>
        <begin position="75"/>
        <end position="77"/>
    </location>
</feature>
<feature type="strand" evidence="14">
    <location>
        <begin position="79"/>
        <end position="83"/>
    </location>
</feature>
<feature type="strand" evidence="14">
    <location>
        <begin position="86"/>
        <end position="91"/>
    </location>
</feature>
<feature type="strand" evidence="14">
    <location>
        <begin position="94"/>
        <end position="102"/>
    </location>
</feature>
<feature type="strand" evidence="14">
    <location>
        <begin position="143"/>
        <end position="156"/>
    </location>
</feature>
<feature type="helix" evidence="14">
    <location>
        <begin position="157"/>
        <end position="175"/>
    </location>
</feature>
<feature type="helix" evidence="14">
    <location>
        <begin position="178"/>
        <end position="181"/>
    </location>
</feature>
<feature type="helix" evidence="14">
    <location>
        <begin position="237"/>
        <end position="259"/>
    </location>
</feature>
<feature type="turn" evidence="14">
    <location>
        <begin position="260"/>
        <end position="262"/>
    </location>
</feature>
<feature type="strand" evidence="14">
    <location>
        <begin position="267"/>
        <end position="269"/>
    </location>
</feature>
<feature type="strand" evidence="14">
    <location>
        <begin position="271"/>
        <end position="277"/>
    </location>
</feature>
<feature type="strand" evidence="14">
    <location>
        <begin position="280"/>
        <end position="288"/>
    </location>
</feature>
<feature type="strand" evidence="14">
    <location>
        <begin position="290"/>
        <end position="295"/>
    </location>
</feature>
<feature type="strand" evidence="14">
    <location>
        <begin position="298"/>
        <end position="301"/>
    </location>
</feature>
<feature type="turn" evidence="14">
    <location>
        <begin position="308"/>
        <end position="311"/>
    </location>
</feature>
<feature type="helix" evidence="14">
    <location>
        <begin position="312"/>
        <end position="321"/>
    </location>
</feature>
<feature type="helix" evidence="14">
    <location>
        <begin position="323"/>
        <end position="326"/>
    </location>
</feature>
<feature type="turn" evidence="14">
    <location>
        <begin position="327"/>
        <end position="329"/>
    </location>
</feature>
<feature type="strand" evidence="14">
    <location>
        <begin position="330"/>
        <end position="332"/>
    </location>
</feature>
<feature type="helix" evidence="14">
    <location>
        <begin position="341"/>
        <end position="343"/>
    </location>
</feature>
<feature type="strand" evidence="14">
    <location>
        <begin position="346"/>
        <end position="351"/>
    </location>
</feature>
<feature type="strand" evidence="14">
    <location>
        <begin position="359"/>
        <end position="362"/>
    </location>
</feature>
<feature type="helix" evidence="14">
    <location>
        <begin position="365"/>
        <end position="368"/>
    </location>
</feature>
<feature type="strand" evidence="14">
    <location>
        <begin position="369"/>
        <end position="376"/>
    </location>
</feature>
<feature type="helix" evidence="14">
    <location>
        <begin position="377"/>
        <end position="379"/>
    </location>
</feature>
<feature type="turn" evidence="14">
    <location>
        <begin position="383"/>
        <end position="385"/>
    </location>
</feature>
<feature type="strand" evidence="14">
    <location>
        <begin position="390"/>
        <end position="393"/>
    </location>
</feature>
<feature type="strand" evidence="13">
    <location>
        <begin position="400"/>
        <end position="403"/>
    </location>
</feature>
<feature type="helix" evidence="14">
    <location>
        <begin position="407"/>
        <end position="409"/>
    </location>
</feature>
<feature type="strand" evidence="14">
    <location>
        <begin position="415"/>
        <end position="420"/>
    </location>
</feature>
<feature type="helix" evidence="14">
    <location>
        <begin position="421"/>
        <end position="423"/>
    </location>
</feature>
<feature type="strand" evidence="14">
    <location>
        <begin position="431"/>
        <end position="435"/>
    </location>
</feature>
<feature type="helix" evidence="14">
    <location>
        <begin position="437"/>
        <end position="440"/>
    </location>
</feature>
<feature type="helix" evidence="14">
    <location>
        <begin position="445"/>
        <end position="455"/>
    </location>
</feature>
<feature type="helix" evidence="14">
    <location>
        <begin position="456"/>
        <end position="458"/>
    </location>
</feature>
<feature type="helix" evidence="14">
    <location>
        <begin position="466"/>
        <end position="479"/>
    </location>
</feature>
<feature type="strand" evidence="14">
    <location>
        <begin position="481"/>
        <end position="483"/>
    </location>
</feature>
<feature type="strand" evidence="14">
    <location>
        <begin position="486"/>
        <end position="488"/>
    </location>
</feature>
<feature type="helix" evidence="14">
    <location>
        <begin position="490"/>
        <end position="492"/>
    </location>
</feature>
<feature type="strand" evidence="14">
    <location>
        <begin position="500"/>
        <end position="506"/>
    </location>
</feature>
<feature type="helix" evidence="14">
    <location>
        <begin position="507"/>
        <end position="510"/>
    </location>
</feature>
<evidence type="ECO:0000250" key="1">
    <source>
        <dbReference type="UniProtKB" id="Q3UYC0"/>
    </source>
</evidence>
<evidence type="ECO:0000250" key="2">
    <source>
        <dbReference type="UniProtKB" id="Q5M821"/>
    </source>
</evidence>
<evidence type="ECO:0000255" key="3">
    <source>
        <dbReference type="PROSITE-ProRule" id="PRU01082"/>
    </source>
</evidence>
<evidence type="ECO:0000256" key="4">
    <source>
        <dbReference type="SAM" id="MobiDB-lite"/>
    </source>
</evidence>
<evidence type="ECO:0000269" key="5">
    <source>
    </source>
</evidence>
<evidence type="ECO:0000303" key="6">
    <source>
    </source>
</evidence>
<evidence type="ECO:0000305" key="7"/>
<evidence type="ECO:0000305" key="8">
    <source>
    </source>
</evidence>
<evidence type="ECO:0007744" key="9">
    <source>
    </source>
</evidence>
<evidence type="ECO:0007744" key="10">
    <source>
    </source>
</evidence>
<evidence type="ECO:0007744" key="11">
    <source>
    </source>
</evidence>
<evidence type="ECO:0007744" key="12">
    <source>
    </source>
</evidence>
<evidence type="ECO:0007829" key="13">
    <source>
        <dbReference type="PDB" id="7L4J"/>
    </source>
</evidence>
<evidence type="ECO:0007829" key="14">
    <source>
        <dbReference type="PDB" id="7N0Z"/>
    </source>
</evidence>
<name>PPM1H_HUMAN</name>
<reference key="1">
    <citation type="submission" date="2002-04" db="EMBL/GenBank/DDBJ databases">
        <title>Cloning and characterization of Urcc2, a novel gene up-regulated in colon cancer.</title>
        <authorList>
            <person name="Shimokawa T."/>
            <person name="Furukawa Y."/>
            <person name="Nakamura Y."/>
        </authorList>
    </citation>
    <scope>NUCLEOTIDE SEQUENCE [MRNA]</scope>
</reference>
<reference key="2">
    <citation type="journal article" date="2006" name="Nature">
        <title>The finished DNA sequence of human chromosome 12.</title>
        <authorList>
            <person name="Scherer S.E."/>
            <person name="Muzny D.M."/>
            <person name="Buhay C.J."/>
            <person name="Chen R."/>
            <person name="Cree A."/>
            <person name="Ding Y."/>
            <person name="Dugan-Rocha S."/>
            <person name="Gill R."/>
            <person name="Gunaratne P."/>
            <person name="Harris R.A."/>
            <person name="Hawes A.C."/>
            <person name="Hernandez J."/>
            <person name="Hodgson A.V."/>
            <person name="Hume J."/>
            <person name="Jackson A."/>
            <person name="Khan Z.M."/>
            <person name="Kovar-Smith C."/>
            <person name="Lewis L.R."/>
            <person name="Lozado R.J."/>
            <person name="Metzker M.L."/>
            <person name="Milosavljevic A."/>
            <person name="Miner G.R."/>
            <person name="Montgomery K.T."/>
            <person name="Morgan M.B."/>
            <person name="Nazareth L.V."/>
            <person name="Scott G."/>
            <person name="Sodergren E."/>
            <person name="Song X.-Z."/>
            <person name="Steffen D."/>
            <person name="Lovering R.C."/>
            <person name="Wheeler D.A."/>
            <person name="Worley K.C."/>
            <person name="Yuan Y."/>
            <person name="Zhang Z."/>
            <person name="Adams C.Q."/>
            <person name="Ansari-Lari M.A."/>
            <person name="Ayele M."/>
            <person name="Brown M.J."/>
            <person name="Chen G."/>
            <person name="Chen Z."/>
            <person name="Clerc-Blankenburg K.P."/>
            <person name="Davis C."/>
            <person name="Delgado O."/>
            <person name="Dinh H.H."/>
            <person name="Draper H."/>
            <person name="Gonzalez-Garay M.L."/>
            <person name="Havlak P."/>
            <person name="Jackson L.R."/>
            <person name="Jacob L.S."/>
            <person name="Kelly S.H."/>
            <person name="Li L."/>
            <person name="Li Z."/>
            <person name="Liu J."/>
            <person name="Liu W."/>
            <person name="Lu J."/>
            <person name="Maheshwari M."/>
            <person name="Nguyen B.-V."/>
            <person name="Okwuonu G.O."/>
            <person name="Pasternak S."/>
            <person name="Perez L.M."/>
            <person name="Plopper F.J.H."/>
            <person name="Santibanez J."/>
            <person name="Shen H."/>
            <person name="Tabor P.E."/>
            <person name="Verduzco D."/>
            <person name="Waldron L."/>
            <person name="Wang Q."/>
            <person name="Williams G.A."/>
            <person name="Zhang J."/>
            <person name="Zhou J."/>
            <person name="Allen C.C."/>
            <person name="Amin A.G."/>
            <person name="Anyalebechi V."/>
            <person name="Bailey M."/>
            <person name="Barbaria J.A."/>
            <person name="Bimage K.E."/>
            <person name="Bryant N.P."/>
            <person name="Burch P.E."/>
            <person name="Burkett C.E."/>
            <person name="Burrell K.L."/>
            <person name="Calderon E."/>
            <person name="Cardenas V."/>
            <person name="Carter K."/>
            <person name="Casias K."/>
            <person name="Cavazos I."/>
            <person name="Cavazos S.R."/>
            <person name="Ceasar H."/>
            <person name="Chacko J."/>
            <person name="Chan S.N."/>
            <person name="Chavez D."/>
            <person name="Christopoulos C."/>
            <person name="Chu J."/>
            <person name="Cockrell R."/>
            <person name="Cox C.D."/>
            <person name="Dang M."/>
            <person name="Dathorne S.R."/>
            <person name="David R."/>
            <person name="Davis C.M."/>
            <person name="Davy-Carroll L."/>
            <person name="Deshazo D.R."/>
            <person name="Donlin J.E."/>
            <person name="D'Souza L."/>
            <person name="Eaves K.A."/>
            <person name="Egan A."/>
            <person name="Emery-Cohen A.J."/>
            <person name="Escotto M."/>
            <person name="Flagg N."/>
            <person name="Forbes L.D."/>
            <person name="Gabisi A.M."/>
            <person name="Garza M."/>
            <person name="Hamilton C."/>
            <person name="Henderson N."/>
            <person name="Hernandez O."/>
            <person name="Hines S."/>
            <person name="Hogues M.E."/>
            <person name="Huang M."/>
            <person name="Idlebird D.G."/>
            <person name="Johnson R."/>
            <person name="Jolivet A."/>
            <person name="Jones S."/>
            <person name="Kagan R."/>
            <person name="King L.M."/>
            <person name="Leal B."/>
            <person name="Lebow H."/>
            <person name="Lee S."/>
            <person name="LeVan J.M."/>
            <person name="Lewis L.C."/>
            <person name="London P."/>
            <person name="Lorensuhewa L.M."/>
            <person name="Loulseged H."/>
            <person name="Lovett D.A."/>
            <person name="Lucier A."/>
            <person name="Lucier R.L."/>
            <person name="Ma J."/>
            <person name="Madu R.C."/>
            <person name="Mapua P."/>
            <person name="Martindale A.D."/>
            <person name="Martinez E."/>
            <person name="Massey E."/>
            <person name="Mawhiney S."/>
            <person name="Meador M.G."/>
            <person name="Mendez S."/>
            <person name="Mercado C."/>
            <person name="Mercado I.C."/>
            <person name="Merritt C.E."/>
            <person name="Miner Z.L."/>
            <person name="Minja E."/>
            <person name="Mitchell T."/>
            <person name="Mohabbat F."/>
            <person name="Mohabbat K."/>
            <person name="Montgomery B."/>
            <person name="Moore N."/>
            <person name="Morris S."/>
            <person name="Munidasa M."/>
            <person name="Ngo R.N."/>
            <person name="Nguyen N.B."/>
            <person name="Nickerson E."/>
            <person name="Nwaokelemeh O.O."/>
            <person name="Nwokenkwo S."/>
            <person name="Obregon M."/>
            <person name="Oguh M."/>
            <person name="Oragunye N."/>
            <person name="Oviedo R.J."/>
            <person name="Parish B.J."/>
            <person name="Parker D.N."/>
            <person name="Parrish J."/>
            <person name="Parks K.L."/>
            <person name="Paul H.A."/>
            <person name="Payton B.A."/>
            <person name="Perez A."/>
            <person name="Perrin W."/>
            <person name="Pickens A."/>
            <person name="Primus E.L."/>
            <person name="Pu L.-L."/>
            <person name="Puazo M."/>
            <person name="Quiles M.M."/>
            <person name="Quiroz J.B."/>
            <person name="Rabata D."/>
            <person name="Reeves K."/>
            <person name="Ruiz S.J."/>
            <person name="Shao H."/>
            <person name="Sisson I."/>
            <person name="Sonaike T."/>
            <person name="Sorelle R.P."/>
            <person name="Sutton A.E."/>
            <person name="Svatek A.F."/>
            <person name="Svetz L.A."/>
            <person name="Tamerisa K.S."/>
            <person name="Taylor T.R."/>
            <person name="Teague B."/>
            <person name="Thomas N."/>
            <person name="Thorn R.D."/>
            <person name="Trejos Z.Y."/>
            <person name="Trevino B.K."/>
            <person name="Ukegbu O.N."/>
            <person name="Urban J.B."/>
            <person name="Vasquez L.I."/>
            <person name="Vera V.A."/>
            <person name="Villasana D.M."/>
            <person name="Wang L."/>
            <person name="Ward-Moore S."/>
            <person name="Warren J.T."/>
            <person name="Wei X."/>
            <person name="White F."/>
            <person name="Williamson A.L."/>
            <person name="Wleczyk R."/>
            <person name="Wooden H.S."/>
            <person name="Wooden S.H."/>
            <person name="Yen J."/>
            <person name="Yoon L."/>
            <person name="Yoon V."/>
            <person name="Zorrilla S.E."/>
            <person name="Nelson D."/>
            <person name="Kucherlapati R."/>
            <person name="Weinstock G."/>
            <person name="Gibbs R.A."/>
        </authorList>
    </citation>
    <scope>NUCLEOTIDE SEQUENCE [LARGE SCALE GENOMIC DNA]</scope>
</reference>
<reference key="3">
    <citation type="submission" date="2005-07" db="EMBL/GenBank/DDBJ databases">
        <authorList>
            <person name="Mural R.J."/>
            <person name="Istrail S."/>
            <person name="Sutton G."/>
            <person name="Florea L."/>
            <person name="Halpern A.L."/>
            <person name="Mobarry C.M."/>
            <person name="Lippert R."/>
            <person name="Walenz B."/>
            <person name="Shatkay H."/>
            <person name="Dew I."/>
            <person name="Miller J.R."/>
            <person name="Flanigan M.J."/>
            <person name="Edwards N.J."/>
            <person name="Bolanos R."/>
            <person name="Fasulo D."/>
            <person name="Halldorsson B.V."/>
            <person name="Hannenhalli S."/>
            <person name="Turner R."/>
            <person name="Yooseph S."/>
            <person name="Lu F."/>
            <person name="Nusskern D.R."/>
            <person name="Shue B.C."/>
            <person name="Zheng X.H."/>
            <person name="Zhong F."/>
            <person name="Delcher A.L."/>
            <person name="Huson D.H."/>
            <person name="Kravitz S.A."/>
            <person name="Mouchard L."/>
            <person name="Reinert K."/>
            <person name="Remington K.A."/>
            <person name="Clark A.G."/>
            <person name="Waterman M.S."/>
            <person name="Eichler E.E."/>
            <person name="Adams M.D."/>
            <person name="Hunkapiller M.W."/>
            <person name="Myers E.W."/>
            <person name="Venter J.C."/>
        </authorList>
    </citation>
    <scope>NUCLEOTIDE SEQUENCE [LARGE SCALE GENOMIC DNA]</scope>
</reference>
<reference key="4">
    <citation type="journal article" date="2004" name="Genome Res.">
        <title>The status, quality, and expansion of the NIH full-length cDNA project: the Mammalian Gene Collection (MGC).</title>
        <authorList>
            <consortium name="The MGC Project Team"/>
        </authorList>
    </citation>
    <scope>NUCLEOTIDE SEQUENCE [LARGE SCALE MRNA]</scope>
    <source>
        <tissue>Brain</tissue>
    </source>
</reference>
<reference key="5">
    <citation type="journal article" date="1999" name="DNA Res.">
        <title>Characterization of cDNA clones selected by the GeneMark analysis from size-fractionated cDNA libraries from human brain.</title>
        <authorList>
            <person name="Hirosawa M."/>
            <person name="Nagase T."/>
            <person name="Ishikawa K."/>
            <person name="Kikuno R."/>
            <person name="Nomura N."/>
            <person name="Ohara O."/>
        </authorList>
    </citation>
    <scope>NUCLEOTIDE SEQUENCE [LARGE SCALE MRNA] OF 87-514</scope>
    <source>
        <tissue>Brain</tissue>
    </source>
</reference>
<reference key="6">
    <citation type="journal article" date="2009" name="Mol. Cell. Proteomics">
        <title>A strategy for precise and large scale identification of core fucosylated glycoproteins.</title>
        <authorList>
            <person name="Jia W."/>
            <person name="Lu Z."/>
            <person name="Fu Y."/>
            <person name="Wang H.P."/>
            <person name="Wang L.H."/>
            <person name="Chi H."/>
            <person name="Yuan Z.F."/>
            <person name="Zheng Z.B."/>
            <person name="Song L.N."/>
            <person name="Han H.H."/>
            <person name="Liang Y.M."/>
            <person name="Wang J.L."/>
            <person name="Cai Y."/>
            <person name="Zhang Y.K."/>
            <person name="Deng Y.L."/>
            <person name="Ying W.T."/>
            <person name="He S.M."/>
            <person name="Qian X.H."/>
        </authorList>
    </citation>
    <scope>IDENTIFICATION</scope>
</reference>
<reference key="7">
    <citation type="journal article" date="2008" name="Proc. Natl. Acad. Sci. U.S.A.">
        <title>A quantitative atlas of mitotic phosphorylation.</title>
        <authorList>
            <person name="Dephoure N."/>
            <person name="Zhou C."/>
            <person name="Villen J."/>
            <person name="Beausoleil S.A."/>
            <person name="Bakalarski C.E."/>
            <person name="Elledge S.J."/>
            <person name="Gygi S.P."/>
        </authorList>
    </citation>
    <scope>PHOSPHORYLATION [LARGE SCALE ANALYSIS] AT SER-124; SER-211; SER-221; THR-224 AND SER-422</scope>
    <scope>IDENTIFICATION BY MASS SPECTROMETRY [LARGE SCALE ANALYSIS]</scope>
    <source>
        <tissue>Cervix carcinoma</tissue>
    </source>
</reference>
<reference key="8">
    <citation type="journal article" date="2010" name="Sci. Signal.">
        <title>Quantitative phosphoproteomics reveals widespread full phosphorylation site occupancy during mitosis.</title>
        <authorList>
            <person name="Olsen J.V."/>
            <person name="Vermeulen M."/>
            <person name="Santamaria A."/>
            <person name="Kumar C."/>
            <person name="Miller M.L."/>
            <person name="Jensen L.J."/>
            <person name="Gnad F."/>
            <person name="Cox J."/>
            <person name="Jensen T.S."/>
            <person name="Nigg E.A."/>
            <person name="Brunak S."/>
            <person name="Mann M."/>
        </authorList>
    </citation>
    <scope>PHOSPHORYLATION [LARGE SCALE ANALYSIS] AT SER-124</scope>
    <scope>IDENTIFICATION BY MASS SPECTROMETRY [LARGE SCALE ANALYSIS]</scope>
    <source>
        <tissue>Cervix carcinoma</tissue>
    </source>
</reference>
<reference key="9">
    <citation type="journal article" date="2011" name="Cancer Discov.">
        <title>PPM1H is a p27 phosphatase implicated in trastuzumab resistance.</title>
        <authorList>
            <person name="Lee-Hoeflich S.T."/>
            <person name="Pham T.Q."/>
            <person name="Dowbenko D."/>
            <person name="Munroe X."/>
            <person name="Lee J."/>
            <person name="Li L."/>
            <person name="Zhou W."/>
            <person name="Haverty P.M."/>
            <person name="Pujara K."/>
            <person name="Stinson J."/>
            <person name="Chan S.M."/>
            <person name="Eastham-Anderson J."/>
            <person name="Pandita A."/>
            <person name="Seshagiri S."/>
            <person name="Hoeflich K.P."/>
            <person name="Turashvili G."/>
            <person name="Gelmon K.A."/>
            <person name="Aparicio S.A."/>
            <person name="Davis D.P."/>
            <person name="Sliwkowski M.X."/>
            <person name="Stern H.M."/>
        </authorList>
    </citation>
    <scope>SUBCELLULAR LOCATION</scope>
    <scope>FUNCTION</scope>
    <scope>MUTAGENESIS OF HIS-153</scope>
</reference>
<reference key="10">
    <citation type="journal article" date="2011" name="Sci. Signal.">
        <title>System-wide temporal characterization of the proteome and phosphoproteome of human embryonic stem cell differentiation.</title>
        <authorList>
            <person name="Rigbolt K.T."/>
            <person name="Prokhorova T.A."/>
            <person name="Akimov V."/>
            <person name="Henningsen J."/>
            <person name="Johansen P.T."/>
            <person name="Kratchmarova I."/>
            <person name="Kassem M."/>
            <person name="Mann M."/>
            <person name="Olsen J.V."/>
            <person name="Blagoev B."/>
        </authorList>
    </citation>
    <scope>PHOSPHORYLATION [LARGE SCALE ANALYSIS] AT SER-211</scope>
    <scope>IDENTIFICATION BY MASS SPECTROMETRY [LARGE SCALE ANALYSIS]</scope>
</reference>
<reference key="11">
    <citation type="journal article" date="2013" name="J. Proteome Res.">
        <title>Toward a comprehensive characterization of a human cancer cell phosphoproteome.</title>
        <authorList>
            <person name="Zhou H."/>
            <person name="Di Palma S."/>
            <person name="Preisinger C."/>
            <person name="Peng M."/>
            <person name="Polat A.N."/>
            <person name="Heck A.J."/>
            <person name="Mohammed S."/>
        </authorList>
    </citation>
    <scope>PHOSPHORYLATION [LARGE SCALE ANALYSIS] AT SER-124; SER-211 AND SER-221</scope>
    <scope>IDENTIFICATION BY MASS SPECTROMETRY [LARGE SCALE ANALYSIS]</scope>
    <source>
        <tissue>Cervix carcinoma</tissue>
        <tissue>Erythroleukemia</tissue>
    </source>
</reference>
<protein>
    <recommendedName>
        <fullName>Protein phosphatase 1H</fullName>
        <ecNumber>3.1.3.16</ecNumber>
    </recommendedName>
</protein>
<proteinExistence type="evidence at protein level"/>
<comment type="function">
    <text evidence="5">Dephosphorylates CDKN1B at 'Thr-187', thus removing a signal for proteasomal degradation.</text>
</comment>
<comment type="catalytic activity">
    <reaction>
        <text>O-phospho-L-seryl-[protein] + H2O = L-seryl-[protein] + phosphate</text>
        <dbReference type="Rhea" id="RHEA:20629"/>
        <dbReference type="Rhea" id="RHEA-COMP:9863"/>
        <dbReference type="Rhea" id="RHEA-COMP:11604"/>
        <dbReference type="ChEBI" id="CHEBI:15377"/>
        <dbReference type="ChEBI" id="CHEBI:29999"/>
        <dbReference type="ChEBI" id="CHEBI:43474"/>
        <dbReference type="ChEBI" id="CHEBI:83421"/>
        <dbReference type="EC" id="3.1.3.16"/>
    </reaction>
</comment>
<comment type="catalytic activity">
    <reaction>
        <text>O-phospho-L-threonyl-[protein] + H2O = L-threonyl-[protein] + phosphate</text>
        <dbReference type="Rhea" id="RHEA:47004"/>
        <dbReference type="Rhea" id="RHEA-COMP:11060"/>
        <dbReference type="Rhea" id="RHEA-COMP:11605"/>
        <dbReference type="ChEBI" id="CHEBI:15377"/>
        <dbReference type="ChEBI" id="CHEBI:30013"/>
        <dbReference type="ChEBI" id="CHEBI:43474"/>
        <dbReference type="ChEBI" id="CHEBI:61977"/>
        <dbReference type="EC" id="3.1.3.16"/>
    </reaction>
</comment>
<comment type="interaction">
    <interactant intactId="EBI-8796752">
        <id>Q9ULR3</id>
    </interactant>
    <interactant intactId="EBI-8796752">
        <id>Q9ULR3</id>
        <label>PPM1H</label>
    </interactant>
    <organismsDiffer>false</organismsDiffer>
    <experiments>3</experiments>
</comment>
<comment type="interaction">
    <interactant intactId="EBI-8796752">
        <id>Q9ULR3</id>
    </interactant>
    <interactant intactId="EBI-726075">
        <id>P61026</id>
        <label>RAB10</label>
    </interactant>
    <organismsDiffer>false</organismsDiffer>
    <experiments>4</experiments>
</comment>
<comment type="subcellular location">
    <subcellularLocation>
        <location evidence="5">Nucleus</location>
    </subcellularLocation>
    <subcellularLocation>
        <location evidence="5">Cytoplasm</location>
    </subcellularLocation>
</comment>
<comment type="miscellaneous">
    <text evidence="6">May act as a suppressor of trastuzumab resistance.</text>
</comment>
<comment type="similarity">
    <text evidence="7">Belongs to the PP2C family.</text>
</comment>
<comment type="caution">
    <text evidence="8">A report observed N-glycosylation at Asn-354 (PubMed:19139490). However, as the protein is not predicted to localize in an extracellular compartment of the cell, additional evidence is required to confirm this result.</text>
</comment>
<sequence>MLTRVKSAVANFMGGIMAGSSGSEHGGGSCGGSDLPLRFPYGRPEFLGLSQDEVECSADHIARPILILKETRRLPWATGYAEVINAGKSTHNEDQASCEVLTVKKKAGAVTSTPNRNSSKRRSSLPNGEGLQLKENSESEGVSCHYWSLFDGHAGSGAAVVASRLLQHHITEQLQDIVDILKNSAVLPPTCLGEEPENTPANSRTLTRAASLRGGVGAPGSPSTPPTRFFTEKKIPHECLVIGALESAFKEMDLQIERERSSYNISGGCTALIVICLLGKLYVANAGDSRAIIIRNGEIIPMSSEFTPETERQRLQYLAFMQPHLLGNEFTHLEFPRRVQRKELGKKMLYRDFNMTGWAYKTIEDEDLKFPLIYGEGKKARVMATIGVTRGLGDHDLKVHDSNIYIKPFLSSAPEVRIYDLSKYDHGSDDVLILATDGLWDVLSNEEVAEAITQFLPNCDPDDPHRYTLAAQDLVMRARGVLKDRGWRISNDRLGSGDDISVYVIPLIHGNKLS</sequence>
<organism>
    <name type="scientific">Homo sapiens</name>
    <name type="common">Human</name>
    <dbReference type="NCBI Taxonomy" id="9606"/>
    <lineage>
        <taxon>Eukaryota</taxon>
        <taxon>Metazoa</taxon>
        <taxon>Chordata</taxon>
        <taxon>Craniata</taxon>
        <taxon>Vertebrata</taxon>
        <taxon>Euteleostomi</taxon>
        <taxon>Mammalia</taxon>
        <taxon>Eutheria</taxon>
        <taxon>Euarchontoglires</taxon>
        <taxon>Primates</taxon>
        <taxon>Haplorrhini</taxon>
        <taxon>Catarrhini</taxon>
        <taxon>Hominidae</taxon>
        <taxon>Homo</taxon>
    </lineage>
</organism>
<gene>
    <name type="primary">PPM1H</name>
    <name type="synonym">ARHCL1</name>
    <name type="synonym">KIAA1157</name>
    <name type="synonym">URCC2</name>
</gene>